<dbReference type="EC" id="3.1.-.-"/>
<dbReference type="EMBL" id="AL123456">
    <property type="protein sequence ID" value="CCP46576.1"/>
    <property type="molecule type" value="Genomic_DNA"/>
</dbReference>
<dbReference type="RefSeq" id="NP_218266.1">
    <property type="nucleotide sequence ID" value="NC_000962.3"/>
</dbReference>
<dbReference type="RefSeq" id="WP_003899673.1">
    <property type="nucleotide sequence ID" value="NC_000962.3"/>
</dbReference>
<dbReference type="STRING" id="83332.Rv3749c"/>
<dbReference type="PaxDb" id="83332-Rv3749c"/>
<dbReference type="DNASU" id="885384"/>
<dbReference type="GeneID" id="885384"/>
<dbReference type="KEGG" id="mtu:Rv3749c"/>
<dbReference type="PATRIC" id="fig|83332.12.peg.4178"/>
<dbReference type="TubercuList" id="Rv3749c"/>
<dbReference type="eggNOG" id="COG1569">
    <property type="taxonomic scope" value="Bacteria"/>
</dbReference>
<dbReference type="HOGENOM" id="CLU_1576796_0_0_11"/>
<dbReference type="InParanoid" id="L0TGF0"/>
<dbReference type="OrthoDB" id="113459at2"/>
<dbReference type="Proteomes" id="UP000001584">
    <property type="component" value="Chromosome"/>
</dbReference>
<dbReference type="GO" id="GO:0004518">
    <property type="term" value="F:nuclease activity"/>
    <property type="evidence" value="ECO:0007669"/>
    <property type="project" value="UniProtKB-KW"/>
</dbReference>
<evidence type="ECO:0000303" key="1">
    <source>
    </source>
</evidence>
<evidence type="ECO:0000305" key="2">
    <source>
    </source>
</evidence>
<protein>
    <recommendedName>
        <fullName evidence="1">Putative ribonuclease VapC50</fullName>
        <shortName>RNase VapC50</shortName>
        <ecNumber>3.1.-.-</ecNumber>
    </recommendedName>
    <alternativeName>
        <fullName evidence="1">Toxin VapC50</fullName>
    </alternativeName>
</protein>
<name>VPC50_MYCTU</name>
<keyword id="KW-0378">Hydrolase</keyword>
<keyword id="KW-0540">Nuclease</keyword>
<keyword id="KW-1185">Reference proteome</keyword>
<keyword id="KW-1277">Toxin-antitoxin system</keyword>
<proteinExistence type="evidence at protein level"/>
<reference key="1">
    <citation type="journal article" date="1998" name="Nature">
        <title>Deciphering the biology of Mycobacterium tuberculosis from the complete genome sequence.</title>
        <authorList>
            <person name="Cole S.T."/>
            <person name="Brosch R."/>
            <person name="Parkhill J."/>
            <person name="Garnier T."/>
            <person name="Churcher C.M."/>
            <person name="Harris D.E."/>
            <person name="Gordon S.V."/>
            <person name="Eiglmeier K."/>
            <person name="Gas S."/>
            <person name="Barry C.E. III"/>
            <person name="Tekaia F."/>
            <person name="Badcock K."/>
            <person name="Basham D."/>
            <person name="Brown D."/>
            <person name="Chillingworth T."/>
            <person name="Connor R."/>
            <person name="Davies R.M."/>
            <person name="Devlin K."/>
            <person name="Feltwell T."/>
            <person name="Gentles S."/>
            <person name="Hamlin N."/>
            <person name="Holroyd S."/>
            <person name="Hornsby T."/>
            <person name="Jagels K."/>
            <person name="Krogh A."/>
            <person name="McLean J."/>
            <person name="Moule S."/>
            <person name="Murphy L.D."/>
            <person name="Oliver S."/>
            <person name="Osborne J."/>
            <person name="Quail M.A."/>
            <person name="Rajandream M.A."/>
            <person name="Rogers J."/>
            <person name="Rutter S."/>
            <person name="Seeger K."/>
            <person name="Skelton S."/>
            <person name="Squares S."/>
            <person name="Squares R."/>
            <person name="Sulston J.E."/>
            <person name="Taylor K."/>
            <person name="Whitehead S."/>
            <person name="Barrell B.G."/>
        </authorList>
    </citation>
    <scope>NUCLEOTIDE SEQUENCE [LARGE SCALE GENOMIC DNA]</scope>
    <source>
        <strain>ATCC 25618 / H37Rv</strain>
    </source>
</reference>
<reference key="2">
    <citation type="journal article" date="2011" name="Mol. Cell. Proteomics">
        <title>Proteogenomic analysis of Mycobacterium tuberculosis by high resolution mass spectrometry.</title>
        <authorList>
            <person name="Kelkar D.S."/>
            <person name="Kumar D."/>
            <person name="Kumar P."/>
            <person name="Balakrishnan L."/>
            <person name="Muthusamy B."/>
            <person name="Yadav A.K."/>
            <person name="Shrivastava P."/>
            <person name="Marimuthu A."/>
            <person name="Anand S."/>
            <person name="Sundaram H."/>
            <person name="Kingsbury R."/>
            <person name="Harsha H.C."/>
            <person name="Nair B."/>
            <person name="Prasad T.S."/>
            <person name="Chauhan D.S."/>
            <person name="Katoch K."/>
            <person name="Katoch V.M."/>
            <person name="Kumar P."/>
            <person name="Chaerkady R."/>
            <person name="Ramachandran S."/>
            <person name="Dash D."/>
            <person name="Pandey A."/>
        </authorList>
    </citation>
    <scope>IDENTIFICATION BY MASS SPECTROMETRY [LARGE SCALE ANALYSIS]</scope>
    <source>
        <strain>ATCC 25618 / H37Rv</strain>
    </source>
</reference>
<reference key="3">
    <citation type="journal article" date="2014" name="Toxins">
        <title>Multiple toxin-antitoxin systems in Mycobacterium tuberculosis.</title>
        <authorList>
            <person name="Sala A."/>
            <person name="Bordes P."/>
            <person name="Genevaux P."/>
        </authorList>
    </citation>
    <scope>GENE NAME</scope>
    <scope>DISCUSSION OF FUNCTION</scope>
    <scope>REVIEW</scope>
    <source>
        <strain>ATCC 25618 / H37Rv</strain>
    </source>
</reference>
<accession>L0TGF0</accession>
<organism>
    <name type="scientific">Mycobacterium tuberculosis (strain ATCC 25618 / H37Rv)</name>
    <dbReference type="NCBI Taxonomy" id="83332"/>
    <lineage>
        <taxon>Bacteria</taxon>
        <taxon>Bacillati</taxon>
        <taxon>Actinomycetota</taxon>
        <taxon>Actinomycetes</taxon>
        <taxon>Mycobacteriales</taxon>
        <taxon>Mycobacteriaceae</taxon>
        <taxon>Mycobacterium</taxon>
        <taxon>Mycobacterium tuberculosis complex</taxon>
    </lineage>
</organism>
<comment type="function">
    <text evidence="2">Toxic component of a type II toxin-antitoxin (TA) system. An RNase. The cognate antitoxin is VapB50.</text>
</comment>
<sequence>MPCCGSLTRAPIGLCGRRTSWPRLGEPWSTASTSAPNGLTTAFAFGYNDLIAAMNNHYKDRHVLAAAVRERAEVIVTTNLKHFPDDALKPYQIKALHPDDFLLDQLDLYEEATKAVILGMVDAYIDPPFTPHSLLDALGEQVPQFAAKARRLFPSGSPFGLGVLLPFDQ</sequence>
<feature type="chain" id="PRO_0000433057" description="Putative ribonuclease VapC50">
    <location>
        <begin position="1"/>
        <end position="169"/>
    </location>
</feature>
<gene>
    <name evidence="1" type="primary">vapC50</name>
    <name type="ordered locus">Rv3749c</name>
</gene>